<evidence type="ECO:0000250" key="1">
    <source>
        <dbReference type="UniProtKB" id="Q11130"/>
    </source>
</evidence>
<evidence type="ECO:0000255" key="2"/>
<evidence type="ECO:0000269" key="3">
    <source>
    </source>
</evidence>
<evidence type="ECO:0000305" key="4"/>
<evidence type="ECO:0000305" key="5">
    <source>
    </source>
</evidence>
<evidence type="ECO:0000312" key="6">
    <source>
        <dbReference type="RGD" id="735019"/>
    </source>
</evidence>
<reference key="1">
    <citation type="journal article" date="2005" name="APMIS">
        <title>Cloning and expression of rat fucosyltransferase VII at sites of inflammation.</title>
        <authorList>
            <person name="Niittymaki J."/>
            <person name="Mattila P."/>
            <person name="Renkonen R."/>
        </authorList>
    </citation>
    <scope>NUCLEOTIDE SEQUENCE [MRNA]</scope>
    <scope>FUNCTION</scope>
    <scope>CATALYTIC ACTIVITY</scope>
    <scope>GLYCOSYLATION</scope>
    <scope>TISSUE SPECIFICITY</scope>
    <scope>INDUCTION</scope>
    <source>
        <tissue>Kidney</tissue>
    </source>
</reference>
<reference key="2">
    <citation type="journal article" date="2004" name="Nature">
        <title>Genome sequence of the Brown Norway rat yields insights into mammalian evolution.</title>
        <authorList>
            <person name="Gibbs R.A."/>
            <person name="Weinstock G.M."/>
            <person name="Metzker M.L."/>
            <person name="Muzny D.M."/>
            <person name="Sodergren E.J."/>
            <person name="Scherer S."/>
            <person name="Scott G."/>
            <person name="Steffen D."/>
            <person name="Worley K.C."/>
            <person name="Burch P.E."/>
            <person name="Okwuonu G."/>
            <person name="Hines S."/>
            <person name="Lewis L."/>
            <person name="Deramo C."/>
            <person name="Delgado O."/>
            <person name="Dugan-Rocha S."/>
            <person name="Miner G."/>
            <person name="Morgan M."/>
            <person name="Hawes A."/>
            <person name="Gill R."/>
            <person name="Holt R.A."/>
            <person name="Adams M.D."/>
            <person name="Amanatides P.G."/>
            <person name="Baden-Tillson H."/>
            <person name="Barnstead M."/>
            <person name="Chin S."/>
            <person name="Evans C.A."/>
            <person name="Ferriera S."/>
            <person name="Fosler C."/>
            <person name="Glodek A."/>
            <person name="Gu Z."/>
            <person name="Jennings D."/>
            <person name="Kraft C.L."/>
            <person name="Nguyen T."/>
            <person name="Pfannkoch C.M."/>
            <person name="Sitter C."/>
            <person name="Sutton G.G."/>
            <person name="Venter J.C."/>
            <person name="Woodage T."/>
            <person name="Smith D."/>
            <person name="Lee H.-M."/>
            <person name="Gustafson E."/>
            <person name="Cahill P."/>
            <person name="Kana A."/>
            <person name="Doucette-Stamm L."/>
            <person name="Weinstock K."/>
            <person name="Fechtel K."/>
            <person name="Weiss R.B."/>
            <person name="Dunn D.M."/>
            <person name="Green E.D."/>
            <person name="Blakesley R.W."/>
            <person name="Bouffard G.G."/>
            <person name="De Jong P.J."/>
            <person name="Osoegawa K."/>
            <person name="Zhu B."/>
            <person name="Marra M."/>
            <person name="Schein J."/>
            <person name="Bosdet I."/>
            <person name="Fjell C."/>
            <person name="Jones S."/>
            <person name="Krzywinski M."/>
            <person name="Mathewson C."/>
            <person name="Siddiqui A."/>
            <person name="Wye N."/>
            <person name="McPherson J."/>
            <person name="Zhao S."/>
            <person name="Fraser C.M."/>
            <person name="Shetty J."/>
            <person name="Shatsman S."/>
            <person name="Geer K."/>
            <person name="Chen Y."/>
            <person name="Abramzon S."/>
            <person name="Nierman W.C."/>
            <person name="Havlak P.H."/>
            <person name="Chen R."/>
            <person name="Durbin K.J."/>
            <person name="Egan A."/>
            <person name="Ren Y."/>
            <person name="Song X.-Z."/>
            <person name="Li B."/>
            <person name="Liu Y."/>
            <person name="Qin X."/>
            <person name="Cawley S."/>
            <person name="Cooney A.J."/>
            <person name="D'Souza L.M."/>
            <person name="Martin K."/>
            <person name="Wu J.Q."/>
            <person name="Gonzalez-Garay M.L."/>
            <person name="Jackson A.R."/>
            <person name="Kalafus K.J."/>
            <person name="McLeod M.P."/>
            <person name="Milosavljevic A."/>
            <person name="Virk D."/>
            <person name="Volkov A."/>
            <person name="Wheeler D.A."/>
            <person name="Zhang Z."/>
            <person name="Bailey J.A."/>
            <person name="Eichler E.E."/>
            <person name="Tuzun E."/>
            <person name="Birney E."/>
            <person name="Mongin E."/>
            <person name="Ureta-Vidal A."/>
            <person name="Woodwark C."/>
            <person name="Zdobnov E."/>
            <person name="Bork P."/>
            <person name="Suyama M."/>
            <person name="Torrents D."/>
            <person name="Alexandersson M."/>
            <person name="Trask B.J."/>
            <person name="Young J.M."/>
            <person name="Huang H."/>
            <person name="Wang H."/>
            <person name="Xing H."/>
            <person name="Daniels S."/>
            <person name="Gietzen D."/>
            <person name="Schmidt J."/>
            <person name="Stevens K."/>
            <person name="Vitt U."/>
            <person name="Wingrove J."/>
            <person name="Camara F."/>
            <person name="Mar Alba M."/>
            <person name="Abril J.F."/>
            <person name="Guigo R."/>
            <person name="Smit A."/>
            <person name="Dubchak I."/>
            <person name="Rubin E.M."/>
            <person name="Couronne O."/>
            <person name="Poliakov A."/>
            <person name="Huebner N."/>
            <person name="Ganten D."/>
            <person name="Goesele C."/>
            <person name="Hummel O."/>
            <person name="Kreitler T."/>
            <person name="Lee Y.-A."/>
            <person name="Monti J."/>
            <person name="Schulz H."/>
            <person name="Zimdahl H."/>
            <person name="Himmelbauer H."/>
            <person name="Lehrach H."/>
            <person name="Jacob H.J."/>
            <person name="Bromberg S."/>
            <person name="Gullings-Handley J."/>
            <person name="Jensen-Seaman M.I."/>
            <person name="Kwitek A.E."/>
            <person name="Lazar J."/>
            <person name="Pasko D."/>
            <person name="Tonellato P.J."/>
            <person name="Twigger S."/>
            <person name="Ponting C.P."/>
            <person name="Duarte J.M."/>
            <person name="Rice S."/>
            <person name="Goodstadt L."/>
            <person name="Beatson S.A."/>
            <person name="Emes R.D."/>
            <person name="Winter E.E."/>
            <person name="Webber C."/>
            <person name="Brandt P."/>
            <person name="Nyakatura G."/>
            <person name="Adetobi M."/>
            <person name="Chiaromonte F."/>
            <person name="Elnitski L."/>
            <person name="Eswara P."/>
            <person name="Hardison R.C."/>
            <person name="Hou M."/>
            <person name="Kolbe D."/>
            <person name="Makova K."/>
            <person name="Miller W."/>
            <person name="Nekrutenko A."/>
            <person name="Riemer C."/>
            <person name="Schwartz S."/>
            <person name="Taylor J."/>
            <person name="Yang S."/>
            <person name="Zhang Y."/>
            <person name="Lindpaintner K."/>
            <person name="Andrews T.D."/>
            <person name="Caccamo M."/>
            <person name="Clamp M."/>
            <person name="Clarke L."/>
            <person name="Curwen V."/>
            <person name="Durbin R.M."/>
            <person name="Eyras E."/>
            <person name="Searle S.M."/>
            <person name="Cooper G.M."/>
            <person name="Batzoglou S."/>
            <person name="Brudno M."/>
            <person name="Sidow A."/>
            <person name="Stone E.A."/>
            <person name="Payseur B.A."/>
            <person name="Bourque G."/>
            <person name="Lopez-Otin C."/>
            <person name="Puente X.S."/>
            <person name="Chakrabarti K."/>
            <person name="Chatterji S."/>
            <person name="Dewey C."/>
            <person name="Pachter L."/>
            <person name="Bray N."/>
            <person name="Yap V.B."/>
            <person name="Caspi A."/>
            <person name="Tesler G."/>
            <person name="Pevzner P.A."/>
            <person name="Haussler D."/>
            <person name="Roskin K.M."/>
            <person name="Baertsch R."/>
            <person name="Clawson H."/>
            <person name="Furey T.S."/>
            <person name="Hinrichs A.S."/>
            <person name="Karolchik D."/>
            <person name="Kent W.J."/>
            <person name="Rosenbloom K.R."/>
            <person name="Trumbower H."/>
            <person name="Weirauch M."/>
            <person name="Cooper D.N."/>
            <person name="Stenson P.D."/>
            <person name="Ma B."/>
            <person name="Brent M."/>
            <person name="Arumugam M."/>
            <person name="Shteynberg D."/>
            <person name="Copley R.R."/>
            <person name="Taylor M.S."/>
            <person name="Riethman H."/>
            <person name="Mudunuri U."/>
            <person name="Peterson J."/>
            <person name="Guyer M."/>
            <person name="Felsenfeld A."/>
            <person name="Old S."/>
            <person name="Mockrin S."/>
            <person name="Collins F.S."/>
        </authorList>
    </citation>
    <scope>NUCLEOTIDE SEQUENCE [LARGE SCALE GENOMIC DNA]</scope>
    <source>
        <strain>Brown Norway</strain>
    </source>
</reference>
<dbReference type="EC" id="2.4.1.-" evidence="3"/>
<dbReference type="EMBL" id="AJ276068">
    <property type="protein sequence ID" value="CAC81972.2"/>
    <property type="molecule type" value="mRNA"/>
</dbReference>
<dbReference type="EMBL" id="AABR07051241">
    <property type="status" value="NOT_ANNOTATED_CDS"/>
    <property type="molecule type" value="Genomic_DNA"/>
</dbReference>
<dbReference type="RefSeq" id="NP_955785.1">
    <property type="nucleotide sequence ID" value="NM_199491.3"/>
</dbReference>
<dbReference type="SMR" id="Q712G6"/>
<dbReference type="FunCoup" id="Q712G6">
    <property type="interactions" value="15"/>
</dbReference>
<dbReference type="STRING" id="10116.ENSRNOP00000033858"/>
<dbReference type="CAZy" id="GT10">
    <property type="family name" value="Glycosyltransferase Family 10"/>
</dbReference>
<dbReference type="GlyCosmos" id="Q712G6">
    <property type="glycosylation" value="3 sites, No reported glycans"/>
</dbReference>
<dbReference type="GlyGen" id="Q712G6">
    <property type="glycosylation" value="4 sites"/>
</dbReference>
<dbReference type="PhosphoSitePlus" id="Q712G6"/>
<dbReference type="PaxDb" id="10116-ENSRNOP00000033858"/>
<dbReference type="Ensembl" id="ENSRNOT00000037169.5">
    <property type="protein sequence ID" value="ENSRNOP00000033858.4"/>
    <property type="gene ID" value="ENSRNOG00000014156.8"/>
</dbReference>
<dbReference type="GeneID" id="296564"/>
<dbReference type="KEGG" id="rno:296564"/>
<dbReference type="UCSC" id="RGD:735019">
    <property type="organism name" value="rat"/>
</dbReference>
<dbReference type="AGR" id="RGD:735019"/>
<dbReference type="CTD" id="2529"/>
<dbReference type="RGD" id="735019">
    <property type="gene designation" value="Fut7"/>
</dbReference>
<dbReference type="eggNOG" id="KOG2619">
    <property type="taxonomic scope" value="Eukaryota"/>
</dbReference>
<dbReference type="GeneTree" id="ENSGT00940000161618"/>
<dbReference type="InParanoid" id="Q712G6"/>
<dbReference type="OMA" id="PGQPWVW"/>
<dbReference type="OrthoDB" id="427096at2759"/>
<dbReference type="PhylomeDB" id="Q712G6"/>
<dbReference type="BRENDA" id="2.4.1.152">
    <property type="organism ID" value="5301"/>
</dbReference>
<dbReference type="Reactome" id="R-RNO-9037629">
    <property type="pathway name" value="Lewis blood group biosynthesis"/>
</dbReference>
<dbReference type="UniPathway" id="UPA00378"/>
<dbReference type="PRO" id="PR:Q712G6"/>
<dbReference type="Proteomes" id="UP000002494">
    <property type="component" value="Chromosome 3"/>
</dbReference>
<dbReference type="Bgee" id="ENSRNOG00000014156">
    <property type="expression patterns" value="Expressed in thymus and 7 other cell types or tissues"/>
</dbReference>
<dbReference type="ExpressionAtlas" id="Q712G6">
    <property type="expression patterns" value="baseline and differential"/>
</dbReference>
<dbReference type="GO" id="GO:0032580">
    <property type="term" value="C:Golgi cisterna membrane"/>
    <property type="evidence" value="ECO:0007669"/>
    <property type="project" value="UniProtKB-SubCell"/>
</dbReference>
<dbReference type="GO" id="GO:0005802">
    <property type="term" value="C:trans-Golgi network"/>
    <property type="evidence" value="ECO:0000266"/>
    <property type="project" value="RGD"/>
</dbReference>
<dbReference type="GO" id="GO:0017083">
    <property type="term" value="F:4-galactosyl-N-acetylglucosaminide 3-alpha-L-fucosyltransferase activity"/>
    <property type="evidence" value="ECO:0000250"/>
    <property type="project" value="UniProtKB"/>
</dbReference>
<dbReference type="GO" id="GO:0046920">
    <property type="term" value="F:alpha-(1-&gt;3)-fucosyltransferase activity"/>
    <property type="evidence" value="ECO:0000315"/>
    <property type="project" value="UniProtKB"/>
</dbReference>
<dbReference type="GO" id="GO:0008417">
    <property type="term" value="F:fucosyltransferase activity"/>
    <property type="evidence" value="ECO:0000266"/>
    <property type="project" value="RGD"/>
</dbReference>
<dbReference type="GO" id="GO:0002361">
    <property type="term" value="P:CD4-positive, CD25-positive, alpha-beta regulatory T cell differentiation"/>
    <property type="evidence" value="ECO:0000266"/>
    <property type="project" value="RGD"/>
</dbReference>
<dbReference type="GO" id="GO:0006672">
    <property type="term" value="P:ceramide metabolic process"/>
    <property type="evidence" value="ECO:0000266"/>
    <property type="project" value="RGD"/>
</dbReference>
<dbReference type="GO" id="GO:0007566">
    <property type="term" value="P:embryo implantation"/>
    <property type="evidence" value="ECO:0000266"/>
    <property type="project" value="RGD"/>
</dbReference>
<dbReference type="GO" id="GO:0036065">
    <property type="term" value="P:fucosylation"/>
    <property type="evidence" value="ECO:0000318"/>
    <property type="project" value="GO_Central"/>
</dbReference>
<dbReference type="GO" id="GO:0006954">
    <property type="term" value="P:inflammatory response"/>
    <property type="evidence" value="ECO:0000315"/>
    <property type="project" value="UniProtKB"/>
</dbReference>
<dbReference type="GO" id="GO:0002522">
    <property type="term" value="P:leukocyte migration involved in immune response"/>
    <property type="evidence" value="ECO:0000266"/>
    <property type="project" value="RGD"/>
</dbReference>
<dbReference type="GO" id="GO:0002523">
    <property type="term" value="P:leukocyte migration involved in inflammatory response"/>
    <property type="evidence" value="ECO:0000250"/>
    <property type="project" value="UniProtKB"/>
</dbReference>
<dbReference type="GO" id="GO:0097022">
    <property type="term" value="P:lymphocyte migration into lymph node"/>
    <property type="evidence" value="ECO:0000250"/>
    <property type="project" value="UniProtKB"/>
</dbReference>
<dbReference type="GO" id="GO:0097021">
    <property type="term" value="P:lymphocyte migration into lymphoid organs"/>
    <property type="evidence" value="ECO:0000266"/>
    <property type="project" value="RGD"/>
</dbReference>
<dbReference type="GO" id="GO:0045785">
    <property type="term" value="P:positive regulation of cell adhesion"/>
    <property type="evidence" value="ECO:0000266"/>
    <property type="project" value="RGD"/>
</dbReference>
<dbReference type="GO" id="GO:0022409">
    <property type="term" value="P:positive regulation of cell-cell adhesion"/>
    <property type="evidence" value="ECO:0000266"/>
    <property type="project" value="RGD"/>
</dbReference>
<dbReference type="GO" id="GO:1904996">
    <property type="term" value="P:positive regulation of leukocyte adhesion to vascular endothelial cell"/>
    <property type="evidence" value="ECO:0000266"/>
    <property type="project" value="RGD"/>
</dbReference>
<dbReference type="GO" id="GO:1903238">
    <property type="term" value="P:positive regulation of leukocyte tethering or rolling"/>
    <property type="evidence" value="ECO:0000250"/>
    <property type="project" value="UniProtKB"/>
</dbReference>
<dbReference type="GO" id="GO:1902624">
    <property type="term" value="P:positive regulation of neutrophil migration"/>
    <property type="evidence" value="ECO:0000250"/>
    <property type="project" value="UniProtKB"/>
</dbReference>
<dbReference type="GO" id="GO:0006486">
    <property type="term" value="P:protein glycosylation"/>
    <property type="evidence" value="ECO:0000266"/>
    <property type="project" value="RGD"/>
</dbReference>
<dbReference type="GO" id="GO:0060353">
    <property type="term" value="P:regulation of cell adhesion molecule production"/>
    <property type="evidence" value="ECO:0000266"/>
    <property type="project" value="RGD"/>
</dbReference>
<dbReference type="GO" id="GO:0022407">
    <property type="term" value="P:regulation of cell-cell adhesion"/>
    <property type="evidence" value="ECO:0000250"/>
    <property type="project" value="UniProtKB"/>
</dbReference>
<dbReference type="GO" id="GO:0046626">
    <property type="term" value="P:regulation of insulin receptor signaling pathway"/>
    <property type="evidence" value="ECO:0000266"/>
    <property type="project" value="RGD"/>
</dbReference>
<dbReference type="GO" id="GO:1904994">
    <property type="term" value="P:regulation of leukocyte adhesion to vascular endothelial cell"/>
    <property type="evidence" value="ECO:0000266"/>
    <property type="project" value="RGD"/>
</dbReference>
<dbReference type="GO" id="GO:1903037">
    <property type="term" value="P:regulation of leukocyte cell-cell adhesion"/>
    <property type="evidence" value="ECO:0000266"/>
    <property type="project" value="RGD"/>
</dbReference>
<dbReference type="GO" id="GO:1903236">
    <property type="term" value="P:regulation of leukocyte tethering or rolling"/>
    <property type="evidence" value="ECO:0000266"/>
    <property type="project" value="RGD"/>
</dbReference>
<dbReference type="GO" id="GO:2000389">
    <property type="term" value="P:regulation of neutrophil extravasation"/>
    <property type="evidence" value="ECO:0000266"/>
    <property type="project" value="RGD"/>
</dbReference>
<dbReference type="GO" id="GO:0001807">
    <property type="term" value="P:regulation of type IV hypersensitivity"/>
    <property type="evidence" value="ECO:0000266"/>
    <property type="project" value="RGD"/>
</dbReference>
<dbReference type="GO" id="GO:0072678">
    <property type="term" value="P:T cell migration"/>
    <property type="evidence" value="ECO:0000266"/>
    <property type="project" value="RGD"/>
</dbReference>
<dbReference type="FunFam" id="3.40.50.11660:FF:000001">
    <property type="entry name" value="alpha-(1,3)-fucosyltransferase 9"/>
    <property type="match status" value="1"/>
</dbReference>
<dbReference type="Gene3D" id="3.40.50.11660">
    <property type="entry name" value="Glycosyl transferase family 10, C-terminal domain"/>
    <property type="match status" value="1"/>
</dbReference>
<dbReference type="InterPro" id="IPR055270">
    <property type="entry name" value="Glyco_tran_10_C"/>
</dbReference>
<dbReference type="InterPro" id="IPR031481">
    <property type="entry name" value="Glyco_tran_10_N"/>
</dbReference>
<dbReference type="InterPro" id="IPR001503">
    <property type="entry name" value="Glyco_trans_10"/>
</dbReference>
<dbReference type="InterPro" id="IPR038577">
    <property type="entry name" value="GT10-like_C_sf"/>
</dbReference>
<dbReference type="PANTHER" id="PTHR11929">
    <property type="entry name" value="ALPHA- 1,3 -FUCOSYLTRANSFERASE"/>
    <property type="match status" value="1"/>
</dbReference>
<dbReference type="PANTHER" id="PTHR11929:SF12">
    <property type="entry name" value="ALPHA-(1,3)-FUCOSYLTRANSFERASE 7"/>
    <property type="match status" value="1"/>
</dbReference>
<dbReference type="Pfam" id="PF17039">
    <property type="entry name" value="Glyco_tran_10_N"/>
    <property type="match status" value="1"/>
</dbReference>
<dbReference type="Pfam" id="PF00852">
    <property type="entry name" value="Glyco_transf_10"/>
    <property type="match status" value="1"/>
</dbReference>
<dbReference type="SUPFAM" id="SSF53756">
    <property type="entry name" value="UDP-Glycosyltransferase/glycogen phosphorylase"/>
    <property type="match status" value="1"/>
</dbReference>
<proteinExistence type="evidence at protein level"/>
<keyword id="KW-1015">Disulfide bond</keyword>
<keyword id="KW-0325">Glycoprotein</keyword>
<keyword id="KW-0328">Glycosyltransferase</keyword>
<keyword id="KW-0333">Golgi apparatus</keyword>
<keyword id="KW-0472">Membrane</keyword>
<keyword id="KW-1185">Reference proteome</keyword>
<keyword id="KW-0735">Signal-anchor</keyword>
<keyword id="KW-0808">Transferase</keyword>
<keyword id="KW-0812">Transmembrane</keyword>
<keyword id="KW-1133">Transmembrane helix</keyword>
<organism>
    <name type="scientific">Rattus norvegicus</name>
    <name type="common">Rat</name>
    <dbReference type="NCBI Taxonomy" id="10116"/>
    <lineage>
        <taxon>Eukaryota</taxon>
        <taxon>Metazoa</taxon>
        <taxon>Chordata</taxon>
        <taxon>Craniata</taxon>
        <taxon>Vertebrata</taxon>
        <taxon>Euteleostomi</taxon>
        <taxon>Mammalia</taxon>
        <taxon>Eutheria</taxon>
        <taxon>Euarchontoglires</taxon>
        <taxon>Glires</taxon>
        <taxon>Rodentia</taxon>
        <taxon>Myomorpha</taxon>
        <taxon>Muroidea</taxon>
        <taxon>Muridae</taxon>
        <taxon>Murinae</taxon>
        <taxon>Rattus</taxon>
    </lineage>
</organism>
<accession>Q712G6</accession>
<feature type="chain" id="PRO_0000449123" description="Alpha-(1,3)-fucosyltransferase 7">
    <location>
        <begin position="1"/>
        <end position="370"/>
    </location>
</feature>
<feature type="topological domain" description="Cytoplasmic" evidence="4">
    <location>
        <begin position="1"/>
        <end position="36"/>
    </location>
</feature>
<feature type="transmembrane region" description="Helical; Signal-anchor for type II membrane protein" evidence="2">
    <location>
        <begin position="37"/>
        <end position="59"/>
    </location>
</feature>
<feature type="topological domain" description="Lumenal" evidence="4">
    <location>
        <begin position="60"/>
        <end position="370"/>
    </location>
</feature>
<feature type="glycosylation site" description="N-linked (GlcNAc...) asparagine" evidence="2">
    <location>
        <position position="86"/>
    </location>
</feature>
<feature type="glycosylation site" description="N-linked (GlcNAc...) asparagine" evidence="2">
    <location>
        <position position="109"/>
    </location>
</feature>
<feature type="glycosylation site" description="N-linked (GlcNAc...) asparagine" evidence="2">
    <location>
        <position position="319"/>
    </location>
</feature>
<feature type="disulfide bond" evidence="1">
    <location>
        <begin position="96"/>
        <end position="104"/>
    </location>
</feature>
<feature type="disulfide bond" evidence="1">
    <location>
        <begin position="239"/>
        <end position="242"/>
    </location>
</feature>
<feature type="disulfide bond" evidence="1">
    <location>
        <begin position="346"/>
        <end position="349"/>
    </location>
</feature>
<gene>
    <name evidence="6" type="primary">Fut7</name>
</gene>
<protein>
    <recommendedName>
        <fullName evidence="4">Alpha-(1,3)-fucosyltransferase 7</fullName>
        <ecNumber evidence="3">2.4.1.-</ecNumber>
    </recommendedName>
    <alternativeName>
        <fullName>Fucosyltransferase 7</fullName>
    </alternativeName>
    <alternativeName>
        <fullName evidence="1">Fucosyltransferase VII</fullName>
        <shortName evidence="1">Fuc-TVII</shortName>
        <shortName>FucT-VII</shortName>
    </alternativeName>
    <alternativeName>
        <fullName>Galactoside 3-L-fucosyltransferase</fullName>
    </alternativeName>
    <alternativeName>
        <fullName>Selectin ligand synthase</fullName>
    </alternativeName>
</protein>
<comment type="function">
    <text evidence="1 3">Catalyzes the transfer of L-fucose, from a guanosine diphosphate-beta-L-fucose, to the N-acetyl glucosamine (GlcNAc) of a distal alpha2,3 sialylated lactosamine unit of a glycoprotein or a glycolipid-linked sialopolylactosamines chain through an alpha-1,3 glycosidic linkage and participates in the final fucosylation step in the biosynthesis of the sialyl Lewis X (sLe(x)), a carbohydrate involved in cell and matrix adhesion during leukocyte trafficking and fertilization (PubMed:16218937). In vitro, also synthesizes sialyl-dimeric-Lex structures, from VIM-2 structures and both di-fucosylated and trifucosylated structures from mono-fucosylated precursors. However does not catalyze alpha 1-3 fucosylation when an internal alpha 1-3 fucosylation is present in polylactosamine chain and the fucosylation rate of the internal GlcNAc residues is reduced once fucose has been added to the distal GlcNAc. Also catalyzes the transfer of a fucose from GDP-beta-fucose to the 6-sulfated a(2,3)sialylated substrate to produce 6-sulfo sLex mediating significant L-selectin-dependent cell adhesion. Through sialyl-Lewis(x) biosynthesis, can control SELE- and SELP-mediated cell adhesion with leukocytes and allows leukocytes tethering and rolling along the endothelial tissue thereby enabling the leukocytes to accumulate at a site of inflammation. May enhance embryo implantation through sialyl Lewis X (sLeX)-mediated adhesion of embryo cells to endometrium. May affect insulin signaling by up-regulating the phosphorylation and expression of some signaling molecules involved in the insulin-signaling pathway through SLe(x) which is present on the glycans of the INSRR alpha subunit (By similarity).</text>
</comment>
<comment type="catalytic activity">
    <reaction evidence="3">
        <text>an N-acetyl-alpha-neuraminyl-(2-&gt;3)-beta-D-galactosyl-(1-&gt;4)-N-acetyl-beta-D-glucosaminyl derivative + GDP-beta-L-fucose = an alpha-Neu5Ac-(2-&gt;3)-beta-D-Gal-(1-&gt;4)-[alpha-L-Fuc-(1-&gt;3)]-beta-D-GlcNAc derivative + GDP + H(+)</text>
        <dbReference type="Rhea" id="RHEA:56076"/>
        <dbReference type="ChEBI" id="CHEBI:15378"/>
        <dbReference type="ChEBI" id="CHEBI:57273"/>
        <dbReference type="ChEBI" id="CHEBI:58189"/>
        <dbReference type="ChEBI" id="CHEBI:136545"/>
        <dbReference type="ChEBI" id="CHEBI:139509"/>
    </reaction>
    <physiologicalReaction direction="left-to-right" evidence="5">
        <dbReference type="Rhea" id="RHEA:56077"/>
    </physiologicalReaction>
</comment>
<comment type="catalytic activity">
    <reaction evidence="1">
        <text>a neolactoside IV(3)-alpha-NeuAc-nLc4Cer + GDP-beta-L-fucose = a neolactoside IV(3)-alpha-NeuNAc,III(3)-alpha-Fuc-nLc4Cer + GDP + H(+)</text>
        <dbReference type="Rhea" id="RHEA:48392"/>
        <dbReference type="ChEBI" id="CHEBI:15378"/>
        <dbReference type="ChEBI" id="CHEBI:57273"/>
        <dbReference type="ChEBI" id="CHEBI:58189"/>
        <dbReference type="ChEBI" id="CHEBI:90390"/>
        <dbReference type="ChEBI" id="CHEBI:90392"/>
    </reaction>
    <physiologicalReaction direction="left-to-right" evidence="1">
        <dbReference type="Rhea" id="RHEA:48393"/>
    </physiologicalReaction>
</comment>
<comment type="catalytic activity">
    <reaction evidence="1">
        <text>a neolactoside VI(3)-alpha-NeuNAc-nLc6Cer + GDP-beta-L-fucose = a neolactoside VI(3)-alpha-NeuAc,V(3)-alphaFuc-nLc6Cer + GDP + H(+)</text>
        <dbReference type="Rhea" id="RHEA:48356"/>
        <dbReference type="ChEBI" id="CHEBI:15378"/>
        <dbReference type="ChEBI" id="CHEBI:57273"/>
        <dbReference type="ChEBI" id="CHEBI:58189"/>
        <dbReference type="ChEBI" id="CHEBI:90336"/>
        <dbReference type="ChEBI" id="CHEBI:90339"/>
    </reaction>
    <physiologicalReaction direction="left-to-right" evidence="1">
        <dbReference type="Rhea" id="RHEA:48357"/>
    </physiologicalReaction>
</comment>
<comment type="catalytic activity">
    <reaction evidence="1">
        <text>an alpha-Neu5Ac-(2-&gt;3)-beta-D-Gal-(1-&gt;4)-beta-D-GlcNAc-(1-&gt;3)-beta-D-Gal-(1-&gt;4)-[alpha-L-Fuc-(1-&gt;3)]-beta-D-GlcNAc derivative + GDP-beta-L-fucose = an alpha-Neu5Ac-(2-&gt;3)-beta-D-Gal-(1-&gt;4)-[alpha-L-Fuc-(1-&gt;3)]-beta-D-GlcNAc-(1-&gt;3)-beta-D-Gal-(1-&gt;4)-[alpha-L-Fuc-(1-&gt;3)]-beta-D-GlcNAc derivative + GDP + H(+)</text>
        <dbReference type="Rhea" id="RHEA:52864"/>
        <dbReference type="ChEBI" id="CHEBI:15378"/>
        <dbReference type="ChEBI" id="CHEBI:57273"/>
        <dbReference type="ChEBI" id="CHEBI:58189"/>
        <dbReference type="ChEBI" id="CHEBI:145342"/>
        <dbReference type="ChEBI" id="CHEBI:145343"/>
    </reaction>
    <physiologicalReaction direction="left-to-right" evidence="1">
        <dbReference type="Rhea" id="RHEA:52865"/>
    </physiologicalReaction>
</comment>
<comment type="catalytic activity">
    <reaction evidence="1">
        <text>an alpha-Neu5Ac-(2-&gt;3)-beta-D-Gal-(1-&gt;4)-beta-D-GlcNAc6S derivative + GDP-beta-L-fucose = an alpha-Neu5Ac-(2-&gt;3)-beta-D-Gal-(1-&gt;4)-[alpha-L-Fuc-(1-&gt;3)]-beta-D-GlcNAc6S derivative + GDP + H(+)</text>
        <dbReference type="Rhea" id="RHEA:62004"/>
        <dbReference type="ChEBI" id="CHEBI:15378"/>
        <dbReference type="ChEBI" id="CHEBI:57273"/>
        <dbReference type="ChEBI" id="CHEBI:58189"/>
        <dbReference type="ChEBI" id="CHEBI:145344"/>
        <dbReference type="ChEBI" id="CHEBI:145345"/>
    </reaction>
    <physiologicalReaction direction="left-to-right" evidence="1">
        <dbReference type="Rhea" id="RHEA:62005"/>
    </physiologicalReaction>
</comment>
<comment type="catalytic activity">
    <reaction evidence="1">
        <text>alpha-Neu5Ac-(2-&gt;3)-beta-D-Gal-(1-&gt;4)-beta-D-GlcNAc-(1-&gt;3)-beta-D-Gal-(1-&gt;4)-D-Glc + GDP-beta-L-fucose = alpha-Neu5Ac-(2-&gt;3)-beta-D-Gal-(1-&gt;4)-[alpha-L-Fuc-(1-&gt;3)]-beta-D-GlcNAc-(1-&gt;3)-beta-D-Gal-(1-&gt;4)-D-Glc + GDP + H(+)</text>
        <dbReference type="Rhea" id="RHEA:62008"/>
        <dbReference type="ChEBI" id="CHEBI:15378"/>
        <dbReference type="ChEBI" id="CHEBI:57273"/>
        <dbReference type="ChEBI" id="CHEBI:58189"/>
        <dbReference type="ChEBI" id="CHEBI:145346"/>
        <dbReference type="ChEBI" id="CHEBI:145347"/>
    </reaction>
    <physiologicalReaction direction="left-to-right" evidence="1">
        <dbReference type="Rhea" id="RHEA:62009"/>
    </physiologicalReaction>
</comment>
<comment type="catalytic activity">
    <reaction evidence="1">
        <text>alpha-Neu5Ac-(2-&gt;3)-beta-D-Gal-(1-&gt;4)-beta-D-GlcNAc-(1-&gt;3)-beta-D-Gal-(1-&gt;4)-[alpha-L-Fuc-(1-&gt;3)]-beta-D-GlcNAc-(1-&gt;3)-beta-D-Gal-(1-&gt;4)-beta-D-GlcNAc + GDP-beta-L-fucose = alpha-Neu5Ac-(2-&gt;3)-beta-D-Gal-(1-&gt;4)-[alpha-L-Fuc-(1-&gt;3)]-beta-D-GlcNAc-(1-&gt;3)-beta-D-Gal-(1-&gt;4)-[alpha-L-Fuc-(1-&gt;3)]-beta-D-GlcNAc-(1-&gt;3)-beta-D-Gal-(1-&gt;4)-beta-D-GlcNAc + GDP + H(+)</text>
        <dbReference type="Rhea" id="RHEA:62060"/>
        <dbReference type="ChEBI" id="CHEBI:15378"/>
        <dbReference type="ChEBI" id="CHEBI:57273"/>
        <dbReference type="ChEBI" id="CHEBI:58189"/>
        <dbReference type="ChEBI" id="CHEBI:145400"/>
        <dbReference type="ChEBI" id="CHEBI:145401"/>
    </reaction>
    <physiologicalReaction direction="left-to-right" evidence="1">
        <dbReference type="Rhea" id="RHEA:62061"/>
    </physiologicalReaction>
</comment>
<comment type="catalytic activity">
    <reaction evidence="1">
        <text>alpha-Neu5Ac-(2-&gt;3)-beta-D-Gal-(1-&gt;4)-beta-D-GlcNAc-(1-&gt;3)-beta-D-Gal-(1-&gt;4)-beta-D-GlcNAc-(1-&gt;3)-beta-D-Gal-(1-&gt;4)-beta-D-GlcNAc + GDP-beta-L-fucose = alpha-Neu5Ac-(2-&gt;3)-beta-D-Gal-(1-&gt;4)-[alpha-L-Fuc-(1-&gt;3)]-beta-D-GlcNAc-(1-&gt;3)-beta-D-Gal-(1-&gt;4)-beta-D-GlcNAc-(1-&gt;3)-beta-D-Gal-(1-&gt;4)-beta-D-GlcNAc + GDP + H(+)</text>
        <dbReference type="Rhea" id="RHEA:62056"/>
        <dbReference type="ChEBI" id="CHEBI:15378"/>
        <dbReference type="ChEBI" id="CHEBI:57273"/>
        <dbReference type="ChEBI" id="CHEBI:58189"/>
        <dbReference type="ChEBI" id="CHEBI:145398"/>
        <dbReference type="ChEBI" id="CHEBI:145399"/>
    </reaction>
    <physiologicalReaction direction="left-to-right" evidence="1">
        <dbReference type="Rhea" id="RHEA:62057"/>
    </physiologicalReaction>
</comment>
<comment type="activity regulation">
    <text evidence="1">Inhibited by NaCl. Inhibited by GDP in a concentration dependent manner, with an IC(50) value of 93 uM. Also inhibited by GMP and GTP. Inhibited by N-ethylmaleimide. Activated by poly(ethylene glycol) by enhancing the thermal stability of FUT7. Activated by Mn2+, Ca2+, and Mg2+. Both panosialin A and B inhibit activity with IC(50) values of 4.8 and 5.3 ug/ml, respectively. Inhibited by gallic acid (GA) and (-)-epigallocatechin gallate (EGCG) in a time-dependent and irreversible manner with IC(50) values of 60 and 700 nM, respectively.</text>
</comment>
<comment type="pathway">
    <text evidence="1">Protein modification; protein glycosylation.</text>
</comment>
<comment type="subcellular location">
    <subcellularLocation>
        <location>Golgi apparatus</location>
        <location>Golgi stack membrane</location>
        <topology>Single-pass type II membrane protein</topology>
    </subcellularLocation>
</comment>
<comment type="tissue specificity">
    <text evidence="3">Expressed in lymph node and kidney.</text>
</comment>
<comment type="induction">
    <text evidence="3">Strongly induced in kidney allograft during rejection.</text>
</comment>
<comment type="PTM">
    <text evidence="3">N-glycosylated.</text>
</comment>
<comment type="similarity">
    <text evidence="4">Belongs to the glycosyltransferase 10 family.</text>
</comment>
<sequence length="370" mass="42958">MVQGCLCWRGCCDLKTSFPWVTNSRRLWMNCIGCNPVWRLRAWGCLAGGTTLMVIWLFWLLRSVPGGAPAPQPTLTILIWHWPFTNRSPELSSDTCTRYGMASCHLSANRSLLASADAVVFHHRELQTRHSRLPLDQRPHGQPWVWATMESPSNTHGLRHFRGIFNWVLSYRRDSDIFVPYGRLEPFSGPTPPLPAKSRMAAWVVSNFQERQQRAKLYRQLAPHLKVDVFGRASGRPLCPNCLLPTVARYRFYLSFENSQHRDYITEKFWRNALAAGAVPVVLGPPRTTYEAFVPPDAFIHVDDFSSARELAVFLVSMNESRYRGFFAWRDRLRVRLLNDWRERFCTICARYPYLPRSQVYEDLESWFQA</sequence>
<name>FUT7_RAT</name>